<sequence>MDIDNSILIRVVLLGDYCVGKTTTGFVFDGKQFDFSRNCNIGVDFFVKHIVVDNQCVRLQVWDTGGQERFKTITRSYFRNTSCCLLFFSVDDQKSFENIDMWYSLAFEKYDLLNYPVVLVGNKIDLPQEKHVITKKMAEEWCKNQQTKLNLKFSIPYFETSAKNNININEIFYSAAELGLKNIVFKNNNNNNNYNNNNKLNGNKEIQNEKNKGMCFIL</sequence>
<gene>
    <name type="primary">rabO</name>
    <name type="ORF">DDB_G0290407</name>
</gene>
<name>RABO_DICDI</name>
<protein>
    <recommendedName>
        <fullName>Ras-related protein RabO</fullName>
    </recommendedName>
</protein>
<keyword id="KW-1003">Cell membrane</keyword>
<keyword id="KW-0342">GTP-binding</keyword>
<keyword id="KW-0449">Lipoprotein</keyword>
<keyword id="KW-0472">Membrane</keyword>
<keyword id="KW-0488">Methylation</keyword>
<keyword id="KW-0547">Nucleotide-binding</keyword>
<keyword id="KW-0636">Prenylation</keyword>
<keyword id="KW-1185">Reference proteome</keyword>
<evidence type="ECO:0000250" key="1"/>
<evidence type="ECO:0000255" key="2"/>
<evidence type="ECO:0000305" key="3"/>
<proteinExistence type="inferred from homology"/>
<accession>Q54G48</accession>
<comment type="subcellular location">
    <subcellularLocation>
        <location evidence="3">Cell membrane</location>
        <topology evidence="3">Lipid-anchor</topology>
        <orientation evidence="3">Cytoplasmic side</orientation>
    </subcellularLocation>
</comment>
<comment type="similarity">
    <text evidence="3">Belongs to the small GTPase superfamily. Rab family.</text>
</comment>
<organism>
    <name type="scientific">Dictyostelium discoideum</name>
    <name type="common">Social amoeba</name>
    <dbReference type="NCBI Taxonomy" id="44689"/>
    <lineage>
        <taxon>Eukaryota</taxon>
        <taxon>Amoebozoa</taxon>
        <taxon>Evosea</taxon>
        <taxon>Eumycetozoa</taxon>
        <taxon>Dictyostelia</taxon>
        <taxon>Dictyosteliales</taxon>
        <taxon>Dictyosteliaceae</taxon>
        <taxon>Dictyostelium</taxon>
    </lineage>
</organism>
<reference key="1">
    <citation type="journal article" date="2005" name="Nature">
        <title>The genome of the social amoeba Dictyostelium discoideum.</title>
        <authorList>
            <person name="Eichinger L."/>
            <person name="Pachebat J.A."/>
            <person name="Gloeckner G."/>
            <person name="Rajandream M.A."/>
            <person name="Sucgang R."/>
            <person name="Berriman M."/>
            <person name="Song J."/>
            <person name="Olsen R."/>
            <person name="Szafranski K."/>
            <person name="Xu Q."/>
            <person name="Tunggal B."/>
            <person name="Kummerfeld S."/>
            <person name="Madera M."/>
            <person name="Konfortov B.A."/>
            <person name="Rivero F."/>
            <person name="Bankier A.T."/>
            <person name="Lehmann R."/>
            <person name="Hamlin N."/>
            <person name="Davies R."/>
            <person name="Gaudet P."/>
            <person name="Fey P."/>
            <person name="Pilcher K."/>
            <person name="Chen G."/>
            <person name="Saunders D."/>
            <person name="Sodergren E.J."/>
            <person name="Davis P."/>
            <person name="Kerhornou A."/>
            <person name="Nie X."/>
            <person name="Hall N."/>
            <person name="Anjard C."/>
            <person name="Hemphill L."/>
            <person name="Bason N."/>
            <person name="Farbrother P."/>
            <person name="Desany B."/>
            <person name="Just E."/>
            <person name="Morio T."/>
            <person name="Rost R."/>
            <person name="Churcher C.M."/>
            <person name="Cooper J."/>
            <person name="Haydock S."/>
            <person name="van Driessche N."/>
            <person name="Cronin A."/>
            <person name="Goodhead I."/>
            <person name="Muzny D.M."/>
            <person name="Mourier T."/>
            <person name="Pain A."/>
            <person name="Lu M."/>
            <person name="Harper D."/>
            <person name="Lindsay R."/>
            <person name="Hauser H."/>
            <person name="James K.D."/>
            <person name="Quiles M."/>
            <person name="Madan Babu M."/>
            <person name="Saito T."/>
            <person name="Buchrieser C."/>
            <person name="Wardroper A."/>
            <person name="Felder M."/>
            <person name="Thangavelu M."/>
            <person name="Johnson D."/>
            <person name="Knights A."/>
            <person name="Loulseged H."/>
            <person name="Mungall K.L."/>
            <person name="Oliver K."/>
            <person name="Price C."/>
            <person name="Quail M.A."/>
            <person name="Urushihara H."/>
            <person name="Hernandez J."/>
            <person name="Rabbinowitsch E."/>
            <person name="Steffen D."/>
            <person name="Sanders M."/>
            <person name="Ma J."/>
            <person name="Kohara Y."/>
            <person name="Sharp S."/>
            <person name="Simmonds M.N."/>
            <person name="Spiegler S."/>
            <person name="Tivey A."/>
            <person name="Sugano S."/>
            <person name="White B."/>
            <person name="Walker D."/>
            <person name="Woodward J.R."/>
            <person name="Winckler T."/>
            <person name="Tanaka Y."/>
            <person name="Shaulsky G."/>
            <person name="Schleicher M."/>
            <person name="Weinstock G.M."/>
            <person name="Rosenthal A."/>
            <person name="Cox E.C."/>
            <person name="Chisholm R.L."/>
            <person name="Gibbs R.A."/>
            <person name="Loomis W.F."/>
            <person name="Platzer M."/>
            <person name="Kay R.R."/>
            <person name="Williams J.G."/>
            <person name="Dear P.H."/>
            <person name="Noegel A.A."/>
            <person name="Barrell B.G."/>
            <person name="Kuspa A."/>
        </authorList>
    </citation>
    <scope>NUCLEOTIDE SEQUENCE [LARGE SCALE GENOMIC DNA]</scope>
    <source>
        <strain>AX4</strain>
    </source>
</reference>
<dbReference type="EMBL" id="AAFI02000163">
    <property type="protein sequence ID" value="EAL62219.1"/>
    <property type="molecule type" value="Genomic_DNA"/>
</dbReference>
<dbReference type="RefSeq" id="XP_635724.1">
    <property type="nucleotide sequence ID" value="XM_630632.1"/>
</dbReference>
<dbReference type="SMR" id="Q54G48"/>
<dbReference type="FunCoup" id="Q54G48">
    <property type="interactions" value="128"/>
</dbReference>
<dbReference type="STRING" id="44689.Q54G48"/>
<dbReference type="PaxDb" id="44689-DDB0229982"/>
<dbReference type="EnsemblProtists" id="EAL62219">
    <property type="protein sequence ID" value="EAL62219"/>
    <property type="gene ID" value="DDB_G0290407"/>
</dbReference>
<dbReference type="GeneID" id="8627642"/>
<dbReference type="KEGG" id="ddi:DDB_G0290407"/>
<dbReference type="dictyBase" id="DDB_G0290407">
    <property type="gene designation" value="rabO"/>
</dbReference>
<dbReference type="VEuPathDB" id="AmoebaDB:DDB_G0290407"/>
<dbReference type="eggNOG" id="KOG0394">
    <property type="taxonomic scope" value="Eukaryota"/>
</dbReference>
<dbReference type="HOGENOM" id="CLU_041217_10_6_1"/>
<dbReference type="InParanoid" id="Q54G48"/>
<dbReference type="PhylomeDB" id="Q54G48"/>
<dbReference type="PRO" id="PR:Q54G48"/>
<dbReference type="Proteomes" id="UP000002195">
    <property type="component" value="Chromosome 5"/>
</dbReference>
<dbReference type="GO" id="GO:0005886">
    <property type="term" value="C:plasma membrane"/>
    <property type="evidence" value="ECO:0007669"/>
    <property type="project" value="UniProtKB-SubCell"/>
</dbReference>
<dbReference type="GO" id="GO:0005525">
    <property type="term" value="F:GTP binding"/>
    <property type="evidence" value="ECO:0000318"/>
    <property type="project" value="GO_Central"/>
</dbReference>
<dbReference type="GO" id="GO:0003924">
    <property type="term" value="F:GTPase activity"/>
    <property type="evidence" value="ECO:0000318"/>
    <property type="project" value="GO_Central"/>
</dbReference>
<dbReference type="GO" id="GO:0006971">
    <property type="term" value="P:hypotonic response"/>
    <property type="evidence" value="ECO:0007007"/>
    <property type="project" value="dictyBase"/>
</dbReference>
<dbReference type="GO" id="GO:0016192">
    <property type="term" value="P:vesicle-mediated transport"/>
    <property type="evidence" value="ECO:0000318"/>
    <property type="project" value="GO_Central"/>
</dbReference>
<dbReference type="CDD" id="cd00154">
    <property type="entry name" value="Rab"/>
    <property type="match status" value="1"/>
</dbReference>
<dbReference type="FunFam" id="3.40.50.300:FF:001329">
    <property type="entry name" value="Small GTP-binding protein, putative"/>
    <property type="match status" value="1"/>
</dbReference>
<dbReference type="Gene3D" id="3.40.50.300">
    <property type="entry name" value="P-loop containing nucleotide triphosphate hydrolases"/>
    <property type="match status" value="1"/>
</dbReference>
<dbReference type="InterPro" id="IPR027417">
    <property type="entry name" value="P-loop_NTPase"/>
</dbReference>
<dbReference type="InterPro" id="IPR005225">
    <property type="entry name" value="Small_GTP-bd"/>
</dbReference>
<dbReference type="InterPro" id="IPR001806">
    <property type="entry name" value="Small_GTPase"/>
</dbReference>
<dbReference type="NCBIfam" id="TIGR00231">
    <property type="entry name" value="small_GTP"/>
    <property type="match status" value="1"/>
</dbReference>
<dbReference type="PANTHER" id="PTHR47981">
    <property type="entry name" value="RAB FAMILY"/>
    <property type="match status" value="1"/>
</dbReference>
<dbReference type="PANTHER" id="PTHR47981:SF20">
    <property type="entry name" value="RAS-RELATED PROTEIN RAB-7A"/>
    <property type="match status" value="1"/>
</dbReference>
<dbReference type="Pfam" id="PF00071">
    <property type="entry name" value="Ras"/>
    <property type="match status" value="1"/>
</dbReference>
<dbReference type="PRINTS" id="PR00449">
    <property type="entry name" value="RASTRNSFRMNG"/>
</dbReference>
<dbReference type="SMART" id="SM00175">
    <property type="entry name" value="RAB"/>
    <property type="match status" value="1"/>
</dbReference>
<dbReference type="SMART" id="SM00176">
    <property type="entry name" value="RAN"/>
    <property type="match status" value="1"/>
</dbReference>
<dbReference type="SMART" id="SM00173">
    <property type="entry name" value="RAS"/>
    <property type="match status" value="1"/>
</dbReference>
<dbReference type="SMART" id="SM00174">
    <property type="entry name" value="RHO"/>
    <property type="match status" value="1"/>
</dbReference>
<dbReference type="SUPFAM" id="SSF52540">
    <property type="entry name" value="P-loop containing nucleoside triphosphate hydrolases"/>
    <property type="match status" value="1"/>
</dbReference>
<dbReference type="PROSITE" id="PS51419">
    <property type="entry name" value="RAB"/>
    <property type="match status" value="1"/>
</dbReference>
<feature type="chain" id="PRO_0000332764" description="Ras-related protein RabO">
    <location>
        <begin position="1"/>
        <end position="215"/>
    </location>
</feature>
<feature type="propeptide" id="PRO_0000370834" description="Removed in mature form" evidence="2">
    <location>
        <begin position="216"/>
        <end position="218"/>
    </location>
</feature>
<feature type="short sequence motif" description="Effector region" evidence="1">
    <location>
        <begin position="37"/>
        <end position="45"/>
    </location>
</feature>
<feature type="binding site" evidence="1">
    <location>
        <begin position="15"/>
        <end position="22"/>
    </location>
    <ligand>
        <name>GTP</name>
        <dbReference type="ChEBI" id="CHEBI:37565"/>
    </ligand>
</feature>
<feature type="binding site" evidence="1">
    <location>
        <begin position="63"/>
        <end position="67"/>
    </location>
    <ligand>
        <name>GTP</name>
        <dbReference type="ChEBI" id="CHEBI:37565"/>
    </ligand>
</feature>
<feature type="binding site" evidence="1">
    <location>
        <begin position="122"/>
        <end position="125"/>
    </location>
    <ligand>
        <name>GTP</name>
        <dbReference type="ChEBI" id="CHEBI:37565"/>
    </ligand>
</feature>
<feature type="modified residue" description="Cysteine methyl ester" evidence="2">
    <location>
        <position position="215"/>
    </location>
</feature>
<feature type="lipid moiety-binding region" description="S-geranylgeranyl cysteine" evidence="1">
    <location>
        <position position="215"/>
    </location>
</feature>